<protein>
    <recommendedName>
        <fullName evidence="1">ATP-dependent Clp protease proteolytic subunit</fullName>
        <ecNumber evidence="1">3.4.21.92</ecNumber>
    </recommendedName>
    <alternativeName>
        <fullName evidence="1">Endopeptidase Clp</fullName>
    </alternativeName>
</protein>
<organism>
    <name type="scientific">Rubrobacter xylanophilus (strain DSM 9941 / JCM 11954 / NBRC 16129 / PRD-1)</name>
    <dbReference type="NCBI Taxonomy" id="266117"/>
    <lineage>
        <taxon>Bacteria</taxon>
        <taxon>Bacillati</taxon>
        <taxon>Actinomycetota</taxon>
        <taxon>Rubrobacteria</taxon>
        <taxon>Rubrobacterales</taxon>
        <taxon>Rubrobacteraceae</taxon>
        <taxon>Rubrobacter</taxon>
    </lineage>
</organism>
<reference key="1">
    <citation type="submission" date="2006-06" db="EMBL/GenBank/DDBJ databases">
        <title>Complete sequence of Rubrobacter xylanophilus DSM 9941.</title>
        <authorList>
            <consortium name="US DOE Joint Genome Institute"/>
            <person name="Copeland A."/>
            <person name="Lucas S."/>
            <person name="Lapidus A."/>
            <person name="Barry K."/>
            <person name="Detter J.C."/>
            <person name="Glavina del Rio T."/>
            <person name="Hammon N."/>
            <person name="Israni S."/>
            <person name="Dalin E."/>
            <person name="Tice H."/>
            <person name="Pitluck S."/>
            <person name="Munk A.C."/>
            <person name="Brettin T."/>
            <person name="Bruce D."/>
            <person name="Han C."/>
            <person name="Tapia R."/>
            <person name="Gilna P."/>
            <person name="Schmutz J."/>
            <person name="Larimer F."/>
            <person name="Land M."/>
            <person name="Hauser L."/>
            <person name="Kyrpides N."/>
            <person name="Lykidis A."/>
            <person name="da Costa M.S."/>
            <person name="Rainey F.A."/>
            <person name="Empadinhas N."/>
            <person name="Jolivet E."/>
            <person name="Battista J.R."/>
            <person name="Richardson P."/>
        </authorList>
    </citation>
    <scope>NUCLEOTIDE SEQUENCE [LARGE SCALE GENOMIC DNA]</scope>
    <source>
        <strain>DSM 9941 / JCM 11954 / NBRC 16129 / PRD-1</strain>
    </source>
</reference>
<evidence type="ECO:0000255" key="1">
    <source>
        <dbReference type="HAMAP-Rule" id="MF_00444"/>
    </source>
</evidence>
<dbReference type="EC" id="3.4.21.92" evidence="1"/>
<dbReference type="EMBL" id="CP000386">
    <property type="protein sequence ID" value="ABG04499.1"/>
    <property type="molecule type" value="Genomic_DNA"/>
</dbReference>
<dbReference type="RefSeq" id="WP_011564516.1">
    <property type="nucleotide sequence ID" value="NC_008148.1"/>
</dbReference>
<dbReference type="SMR" id="Q1AVS9"/>
<dbReference type="STRING" id="266117.Rxyl_1537"/>
<dbReference type="MEROPS" id="S14.001"/>
<dbReference type="KEGG" id="rxy:Rxyl_1537"/>
<dbReference type="eggNOG" id="COG0740">
    <property type="taxonomic scope" value="Bacteria"/>
</dbReference>
<dbReference type="HOGENOM" id="CLU_058707_3_2_11"/>
<dbReference type="OrthoDB" id="9802800at2"/>
<dbReference type="PhylomeDB" id="Q1AVS9"/>
<dbReference type="Proteomes" id="UP000006637">
    <property type="component" value="Chromosome"/>
</dbReference>
<dbReference type="GO" id="GO:0005737">
    <property type="term" value="C:cytoplasm"/>
    <property type="evidence" value="ECO:0007669"/>
    <property type="project" value="UniProtKB-SubCell"/>
</dbReference>
<dbReference type="GO" id="GO:0009368">
    <property type="term" value="C:endopeptidase Clp complex"/>
    <property type="evidence" value="ECO:0007669"/>
    <property type="project" value="TreeGrafter"/>
</dbReference>
<dbReference type="GO" id="GO:0004176">
    <property type="term" value="F:ATP-dependent peptidase activity"/>
    <property type="evidence" value="ECO:0007669"/>
    <property type="project" value="InterPro"/>
</dbReference>
<dbReference type="GO" id="GO:0051117">
    <property type="term" value="F:ATPase binding"/>
    <property type="evidence" value="ECO:0007669"/>
    <property type="project" value="TreeGrafter"/>
</dbReference>
<dbReference type="GO" id="GO:0004252">
    <property type="term" value="F:serine-type endopeptidase activity"/>
    <property type="evidence" value="ECO:0007669"/>
    <property type="project" value="UniProtKB-UniRule"/>
</dbReference>
<dbReference type="GO" id="GO:0006515">
    <property type="term" value="P:protein quality control for misfolded or incompletely synthesized proteins"/>
    <property type="evidence" value="ECO:0007669"/>
    <property type="project" value="TreeGrafter"/>
</dbReference>
<dbReference type="CDD" id="cd07017">
    <property type="entry name" value="S14_ClpP_2"/>
    <property type="match status" value="1"/>
</dbReference>
<dbReference type="FunFam" id="3.90.226.10:FF:000002">
    <property type="entry name" value="ATP-dependent Clp protease proteolytic subunit"/>
    <property type="match status" value="1"/>
</dbReference>
<dbReference type="Gene3D" id="3.90.226.10">
    <property type="entry name" value="2-enoyl-CoA Hydratase, Chain A, domain 1"/>
    <property type="match status" value="1"/>
</dbReference>
<dbReference type="HAMAP" id="MF_00444">
    <property type="entry name" value="ClpP"/>
    <property type="match status" value="1"/>
</dbReference>
<dbReference type="InterPro" id="IPR001907">
    <property type="entry name" value="ClpP"/>
</dbReference>
<dbReference type="InterPro" id="IPR029045">
    <property type="entry name" value="ClpP/crotonase-like_dom_sf"/>
</dbReference>
<dbReference type="InterPro" id="IPR023562">
    <property type="entry name" value="ClpP/TepA"/>
</dbReference>
<dbReference type="InterPro" id="IPR033135">
    <property type="entry name" value="ClpP_His_AS"/>
</dbReference>
<dbReference type="InterPro" id="IPR018215">
    <property type="entry name" value="ClpP_Ser_AS"/>
</dbReference>
<dbReference type="NCBIfam" id="TIGR00493">
    <property type="entry name" value="clpP"/>
    <property type="match status" value="1"/>
</dbReference>
<dbReference type="NCBIfam" id="NF001368">
    <property type="entry name" value="PRK00277.1"/>
    <property type="match status" value="1"/>
</dbReference>
<dbReference type="NCBIfam" id="NF009205">
    <property type="entry name" value="PRK12553.1"/>
    <property type="match status" value="1"/>
</dbReference>
<dbReference type="PANTHER" id="PTHR10381">
    <property type="entry name" value="ATP-DEPENDENT CLP PROTEASE PROTEOLYTIC SUBUNIT"/>
    <property type="match status" value="1"/>
</dbReference>
<dbReference type="PANTHER" id="PTHR10381:SF70">
    <property type="entry name" value="ATP-DEPENDENT CLP PROTEASE PROTEOLYTIC SUBUNIT"/>
    <property type="match status" value="1"/>
</dbReference>
<dbReference type="Pfam" id="PF00574">
    <property type="entry name" value="CLP_protease"/>
    <property type="match status" value="1"/>
</dbReference>
<dbReference type="PRINTS" id="PR00127">
    <property type="entry name" value="CLPPROTEASEP"/>
</dbReference>
<dbReference type="SUPFAM" id="SSF52096">
    <property type="entry name" value="ClpP/crotonase"/>
    <property type="match status" value="1"/>
</dbReference>
<dbReference type="PROSITE" id="PS00382">
    <property type="entry name" value="CLP_PROTEASE_HIS"/>
    <property type="match status" value="1"/>
</dbReference>
<dbReference type="PROSITE" id="PS00381">
    <property type="entry name" value="CLP_PROTEASE_SER"/>
    <property type="match status" value="1"/>
</dbReference>
<keyword id="KW-0963">Cytoplasm</keyword>
<keyword id="KW-0378">Hydrolase</keyword>
<keyword id="KW-0645">Protease</keyword>
<keyword id="KW-1185">Reference proteome</keyword>
<keyword id="KW-0720">Serine protease</keyword>
<accession>Q1AVS9</accession>
<feature type="chain" id="PRO_0000252847" description="ATP-dependent Clp protease proteolytic subunit">
    <location>
        <begin position="1"/>
        <end position="200"/>
    </location>
</feature>
<feature type="active site" description="Nucleophile" evidence="1">
    <location>
        <position position="104"/>
    </location>
</feature>
<feature type="active site" evidence="1">
    <location>
        <position position="129"/>
    </location>
</feature>
<gene>
    <name evidence="1" type="primary">clpP</name>
    <name type="ordered locus">Rxyl_1537</name>
</gene>
<proteinExistence type="inferred from homology"/>
<comment type="function">
    <text evidence="1">Cleaves peptides in various proteins in a process that requires ATP hydrolysis. Has a chymotrypsin-like activity. Plays a major role in the degradation of misfolded proteins.</text>
</comment>
<comment type="catalytic activity">
    <reaction evidence="1">
        <text>Hydrolysis of proteins to small peptides in the presence of ATP and magnesium. alpha-casein is the usual test substrate. In the absence of ATP, only oligopeptides shorter than five residues are hydrolyzed (such as succinyl-Leu-Tyr-|-NHMec, and Leu-Tyr-Leu-|-Tyr-Trp, in which cleavage of the -Tyr-|-Leu- and -Tyr-|-Trp bonds also occurs).</text>
        <dbReference type="EC" id="3.4.21.92"/>
    </reaction>
</comment>
<comment type="subunit">
    <text evidence="1">Fourteen ClpP subunits assemble into 2 heptameric rings which stack back to back to give a disk-like structure with a central cavity, resembling the structure of eukaryotic proteasomes.</text>
</comment>
<comment type="subcellular location">
    <subcellularLocation>
        <location evidence="1">Cytoplasm</location>
    </subcellularLocation>
</comment>
<comment type="similarity">
    <text evidence="1">Belongs to the peptidase S14 family.</text>
</comment>
<sequence>MSYYDPQGVIPYVIEQSPRGERAMDIYSRLLKDRIIFLGTPVDDQVANAIMAQLLHLESEDPEQDINLYINSPGGSVSAGLAIYDTMQFVKPDIVTTALGMAASMGAFLLAAGTKGKRFALPNTRILLHQPAVGGLAGQASDVEIHARELIRTKRRLNEILSEHTGQPYDKIERDTDRDFIMGAEEAIEYGLIDDIVRHH</sequence>
<name>CLPP_RUBXD</name>